<accession>B3A0G5</accession>
<proteinExistence type="evidence at protein level"/>
<sequence>GRGGPSNYVRL</sequence>
<organism>
    <name type="scientific">Praedatophasma maraisi</name>
    <name type="common">Gladiator</name>
    <name type="synonym">Heel-walker</name>
    <dbReference type="NCBI Taxonomy" id="409170"/>
    <lineage>
        <taxon>Eukaryota</taxon>
        <taxon>Metazoa</taxon>
        <taxon>Ecdysozoa</taxon>
        <taxon>Arthropoda</taxon>
        <taxon>Hexapoda</taxon>
        <taxon>Insecta</taxon>
        <taxon>Pterygota</taxon>
        <taxon>Neoptera</taxon>
        <taxon>Polyneoptera</taxon>
        <taxon>Mantophasmatodea</taxon>
        <taxon>Mantophasmatidae</taxon>
        <taxon>Praedatophasma</taxon>
    </lineage>
</organism>
<protein>
    <recommendedName>
        <fullName evidence="4">Extended FMRFamide-9</fullName>
        <shortName evidence="4">FMRFa-9</shortName>
    </recommendedName>
</protein>
<reference evidence="5" key="1">
    <citation type="journal article" date="2012" name="Syst. Biol.">
        <title>Peptidomics-based phylogeny and biogeography of Mantophasmatodea (Hexapoda).</title>
        <authorList>
            <person name="Predel R."/>
            <person name="Neupert S."/>
            <person name="Huetteroth W."/>
            <person name="Kahnt J."/>
            <person name="Waidelich D."/>
            <person name="Roth S."/>
        </authorList>
    </citation>
    <scope>PROTEIN SEQUENCE</scope>
    <scope>AMIDATION AT LEU-11</scope>
    <source>
        <tissue evidence="3">Thoracic perisympathetic organs</tissue>
    </source>
</reference>
<feature type="peptide" id="PRO_0000421545" description="Extended FMRFamide-9" evidence="3">
    <location>
        <begin position="1"/>
        <end position="11"/>
    </location>
</feature>
<feature type="modified residue" description="Leucine amide" evidence="3">
    <location>
        <position position="11"/>
    </location>
</feature>
<feature type="unsure residue" description="L or I" evidence="3">
    <location>
        <position position="11"/>
    </location>
</feature>
<keyword id="KW-0027">Amidation</keyword>
<keyword id="KW-0903">Direct protein sequencing</keyword>
<keyword id="KW-0527">Neuropeptide</keyword>
<keyword id="KW-0964">Secreted</keyword>
<name>FAR9_PRAMA</name>
<evidence type="ECO:0000250" key="1">
    <source>
        <dbReference type="UniProtKB" id="P34405"/>
    </source>
</evidence>
<evidence type="ECO:0000255" key="2"/>
<evidence type="ECO:0000269" key="3">
    <source>
    </source>
</evidence>
<evidence type="ECO:0000303" key="4">
    <source>
    </source>
</evidence>
<evidence type="ECO:0000305" key="5"/>
<evidence type="ECO:0000305" key="6">
    <source>
    </source>
</evidence>
<comment type="function">
    <text evidence="1">FMRFamides and FMRFamide-like peptides are neuropeptides.</text>
</comment>
<comment type="subcellular location">
    <subcellularLocation>
        <location evidence="6">Secreted</location>
    </subcellularLocation>
</comment>
<comment type="similarity">
    <text evidence="2">Belongs to the FARP (FMRF amide related peptide) family.</text>
</comment>
<dbReference type="GO" id="GO:0005576">
    <property type="term" value="C:extracellular region"/>
    <property type="evidence" value="ECO:0007669"/>
    <property type="project" value="UniProtKB-SubCell"/>
</dbReference>
<dbReference type="GO" id="GO:0007218">
    <property type="term" value="P:neuropeptide signaling pathway"/>
    <property type="evidence" value="ECO:0007669"/>
    <property type="project" value="UniProtKB-KW"/>
</dbReference>